<organism>
    <name type="scientific">Escherichia coli O6:H1 (strain CFT073 / ATCC 700928 / UPEC)</name>
    <dbReference type="NCBI Taxonomy" id="199310"/>
    <lineage>
        <taxon>Bacteria</taxon>
        <taxon>Pseudomonadati</taxon>
        <taxon>Pseudomonadota</taxon>
        <taxon>Gammaproteobacteria</taxon>
        <taxon>Enterobacterales</taxon>
        <taxon>Enterobacteriaceae</taxon>
        <taxon>Escherichia</taxon>
    </lineage>
</organism>
<feature type="chain" id="PRO_0000206833" description="Non-specific ribonucleoside hydrolase RihC">
    <location>
        <begin position="1"/>
        <end position="304"/>
    </location>
</feature>
<feature type="active site" evidence="1">
    <location>
        <position position="233"/>
    </location>
</feature>
<keyword id="KW-0326">Glycosidase</keyword>
<keyword id="KW-0378">Hydrolase</keyword>
<keyword id="KW-1185">Reference proteome</keyword>
<protein>
    <recommendedName>
        <fullName evidence="1">Non-specific ribonucleoside hydrolase RihC</fullName>
        <ecNumber evidence="1">3.2.-.-</ecNumber>
    </recommendedName>
    <alternativeName>
        <fullName evidence="1">Purine/pyrimidine ribonucleoside hydrolase</fullName>
    </alternativeName>
</protein>
<proteinExistence type="inferred from homology"/>
<dbReference type="EC" id="3.2.-.-" evidence="1"/>
<dbReference type="EMBL" id="AE014075">
    <property type="status" value="NOT_ANNOTATED_CDS"/>
    <property type="molecule type" value="Genomic_DNA"/>
</dbReference>
<dbReference type="SMR" id="P0C0W2"/>
<dbReference type="Proteomes" id="UP000001410">
    <property type="component" value="Chromosome"/>
</dbReference>
<dbReference type="GO" id="GO:0005829">
    <property type="term" value="C:cytosol"/>
    <property type="evidence" value="ECO:0007669"/>
    <property type="project" value="TreeGrafter"/>
</dbReference>
<dbReference type="GO" id="GO:0008477">
    <property type="term" value="F:purine nucleosidase activity"/>
    <property type="evidence" value="ECO:0007669"/>
    <property type="project" value="TreeGrafter"/>
</dbReference>
<dbReference type="GO" id="GO:0045437">
    <property type="term" value="F:uridine nucleosidase activity"/>
    <property type="evidence" value="ECO:0007669"/>
    <property type="project" value="UniProtKB-ARBA"/>
</dbReference>
<dbReference type="GO" id="GO:0006144">
    <property type="term" value="P:purine nucleobase metabolic process"/>
    <property type="evidence" value="ECO:0007669"/>
    <property type="project" value="UniProtKB-UniRule"/>
</dbReference>
<dbReference type="GO" id="GO:0006152">
    <property type="term" value="P:purine nucleoside catabolic process"/>
    <property type="evidence" value="ECO:0007669"/>
    <property type="project" value="TreeGrafter"/>
</dbReference>
<dbReference type="GO" id="GO:0006206">
    <property type="term" value="P:pyrimidine nucleobase metabolic process"/>
    <property type="evidence" value="ECO:0007669"/>
    <property type="project" value="UniProtKB-UniRule"/>
</dbReference>
<dbReference type="CDD" id="cd02651">
    <property type="entry name" value="nuc_hydro_IU_UC_XIUA"/>
    <property type="match status" value="1"/>
</dbReference>
<dbReference type="FunFam" id="3.90.245.10:FF:000002">
    <property type="entry name" value="Non-specific ribonucleoside hydrolase RihC"/>
    <property type="match status" value="1"/>
</dbReference>
<dbReference type="Gene3D" id="3.90.245.10">
    <property type="entry name" value="Ribonucleoside hydrolase-like"/>
    <property type="match status" value="1"/>
</dbReference>
<dbReference type="HAMAP" id="MF_01432">
    <property type="entry name" value="Nucleosid_hydro_RihC"/>
    <property type="match status" value="1"/>
</dbReference>
<dbReference type="InterPro" id="IPR015910">
    <property type="entry name" value="I/U_nuclsd_hydro_CS"/>
</dbReference>
<dbReference type="InterPro" id="IPR001910">
    <property type="entry name" value="Inosine/uridine_hydrolase_dom"/>
</dbReference>
<dbReference type="InterPro" id="IPR023186">
    <property type="entry name" value="IUNH"/>
</dbReference>
<dbReference type="InterPro" id="IPR022976">
    <property type="entry name" value="Nucleosid_hydro_RihC_nonspecif"/>
</dbReference>
<dbReference type="InterPro" id="IPR036452">
    <property type="entry name" value="Ribo_hydro-like"/>
</dbReference>
<dbReference type="NCBIfam" id="NF008036">
    <property type="entry name" value="PRK10768.1"/>
    <property type="match status" value="1"/>
</dbReference>
<dbReference type="PANTHER" id="PTHR12304">
    <property type="entry name" value="INOSINE-URIDINE PREFERRING NUCLEOSIDE HYDROLASE"/>
    <property type="match status" value="1"/>
</dbReference>
<dbReference type="PANTHER" id="PTHR12304:SF15">
    <property type="entry name" value="NON-SPECIFIC RIBONUCLEOSIDE HYDROLASE RIHC"/>
    <property type="match status" value="1"/>
</dbReference>
<dbReference type="Pfam" id="PF01156">
    <property type="entry name" value="IU_nuc_hydro"/>
    <property type="match status" value="1"/>
</dbReference>
<dbReference type="SUPFAM" id="SSF53590">
    <property type="entry name" value="Nucleoside hydrolase"/>
    <property type="match status" value="1"/>
</dbReference>
<dbReference type="PROSITE" id="PS01247">
    <property type="entry name" value="IUNH"/>
    <property type="match status" value="1"/>
</dbReference>
<reference key="1">
    <citation type="journal article" date="2002" name="Proc. Natl. Acad. Sci. U.S.A.">
        <title>Extensive mosaic structure revealed by the complete genome sequence of uropathogenic Escherichia coli.</title>
        <authorList>
            <person name="Welch R.A."/>
            <person name="Burland V."/>
            <person name="Plunkett G. III"/>
            <person name="Redford P."/>
            <person name="Roesch P."/>
            <person name="Rasko D."/>
            <person name="Buckles E.L."/>
            <person name="Liou S.-R."/>
            <person name="Boutin A."/>
            <person name="Hackett J."/>
            <person name="Stroud D."/>
            <person name="Mayhew G.F."/>
            <person name="Rose D.J."/>
            <person name="Zhou S."/>
            <person name="Schwartz D.C."/>
            <person name="Perna N.T."/>
            <person name="Mobley H.L.T."/>
            <person name="Donnenberg M.S."/>
            <person name="Blattner F.R."/>
        </authorList>
    </citation>
    <scope>NUCLEOTIDE SEQUENCE [LARGE SCALE GENOMIC DNA]</scope>
    <source>
        <strain>CFT073 / ATCC 700928 / UPEC</strain>
    </source>
</reference>
<gene>
    <name evidence="1" type="primary">rihC</name>
    <name type="ordered locus">c0035.1</name>
</gene>
<accession>P0C0W2</accession>
<evidence type="ECO:0000255" key="1">
    <source>
        <dbReference type="HAMAP-Rule" id="MF_01432"/>
    </source>
</evidence>
<evidence type="ECO:0000305" key="2"/>
<name>RIHC_ECOL6</name>
<sequence length="304" mass="32586">MRLPIFLDTDPGIDDAVAIAAAIFAPELDLQLMTTVAGNVSVEKTTRNALQLLHFWNAEIPLAQGAAVPLVRAPRDAASVHGESGMAGYDFVEHNRQPLGIPAFLAIRDALMRAPEPVTLVAIGPLTNIALLLSQCPECKPYIRRLVIMGGSAGRGNCTPNAEFNIAADPEAAACVFRSGIEIVMCGLDVTNQAILTPDYLATLPELNRTGKMLHALFSHYRSGSMQSGLRMHDLCAIAWLVRPELFTLKPCFVAVETQGEFTSGTTVVDIDGCLGKPANVQVALDLDVKGFQQWVAEVLALAL</sequence>
<comment type="function">
    <text evidence="1">Hydrolyzes both purine and pyrimidine ribonucleosides with a broad-substrate specificity.</text>
</comment>
<comment type="similarity">
    <text evidence="1">Belongs to the IUNH family. RihC subfamily.</text>
</comment>
<comment type="sequence caution" evidence="2">
    <conflict type="erroneous termination">
        <sequence resource="EMBL" id="AE014075"/>
    </conflict>
    <text>Truncated C-terminus.</text>
</comment>